<reference key="1">
    <citation type="journal article" date="1995" name="Arch. Pathol. Lab. Med.">
        <title>Rapid Mycobacterium species assignment and unambiguous identification of mutations associated with antimicrobial resistance in Mycobacterium tuberculosis by automated DNA sequencing.</title>
        <authorList>
            <person name="Kapur V."/>
            <person name="Li L.L."/>
            <person name="Hamrick M.R."/>
            <person name="Plikaytis B.B."/>
            <person name="Shinnick T.M."/>
            <person name="Telenti A."/>
            <person name="Jacobs W.R. Jr."/>
            <person name="Banerjee A."/>
            <person name="Cole S."/>
            <person name="Yuen K.Y."/>
            <person name="Clarridge J.E."/>
            <person name="Kreiswirth B.N."/>
            <person name="Musser J.M."/>
        </authorList>
    </citation>
    <scope>NUCLEOTIDE SEQUENCE [GENOMIC DNA]</scope>
    <source>
        <strain>214</strain>
    </source>
</reference>
<proteinExistence type="inferred from homology"/>
<feature type="chain" id="PRO_0000063454" description="Chaperonin GroEL">
    <location>
        <begin position="1" status="less than"/>
        <end position="120" status="greater than"/>
    </location>
</feature>
<feature type="binding site" evidence="1">
    <location>
        <begin position="23"/>
        <end position="27"/>
    </location>
    <ligand>
        <name>ATP</name>
        <dbReference type="ChEBI" id="CHEBI:30616"/>
    </ligand>
</feature>
<feature type="non-terminal residue">
    <location>
        <position position="1"/>
    </location>
</feature>
<feature type="non-terminal residue">
    <location>
        <position position="120"/>
    </location>
</feature>
<comment type="function">
    <text evidence="1">Together with its co-chaperonin GroES, plays an essential role in assisting protein folding. The GroEL-GroES system forms a nano-cage that allows encapsulation of the non-native substrate proteins and provides a physical environment optimized to promote and accelerate protein folding.</text>
</comment>
<comment type="catalytic activity">
    <reaction evidence="1">
        <text>ATP + H2O + a folded polypeptide = ADP + phosphate + an unfolded polypeptide.</text>
        <dbReference type="EC" id="5.6.1.7"/>
    </reaction>
</comment>
<comment type="subunit">
    <text evidence="1">Forms a cylinder of 14 subunits composed of two heptameric rings stacked back-to-back. Interacts with the co-chaperonin GroES.</text>
</comment>
<comment type="subcellular location">
    <subcellularLocation>
        <location evidence="1">Cytoplasm</location>
    </subcellularLocation>
</comment>
<comment type="similarity">
    <text evidence="1 2">Belongs to the chaperonin (HSP60) family.</text>
</comment>
<organism>
    <name type="scientific">Mycolicibacterium vaccae</name>
    <name type="common">Mycobacterium vaccae</name>
    <dbReference type="NCBI Taxonomy" id="1810"/>
    <lineage>
        <taxon>Bacteria</taxon>
        <taxon>Bacillati</taxon>
        <taxon>Actinomycetota</taxon>
        <taxon>Actinomycetes</taxon>
        <taxon>Mycobacteriales</taxon>
        <taxon>Mycobacteriaceae</taxon>
        <taxon>Mycolicibacterium</taxon>
    </lineage>
</organism>
<name>CH60_MYCVA</name>
<evidence type="ECO:0000255" key="1">
    <source>
        <dbReference type="HAMAP-Rule" id="MF_00600"/>
    </source>
</evidence>
<evidence type="ECO:0000305" key="2"/>
<dbReference type="EC" id="5.6.1.7" evidence="1"/>
<dbReference type="EMBL" id="U17958">
    <property type="protein sequence ID" value="AAB39077.1"/>
    <property type="molecule type" value="Genomic_DNA"/>
</dbReference>
<dbReference type="SMR" id="Q50827"/>
<dbReference type="GO" id="GO:0005737">
    <property type="term" value="C:cytoplasm"/>
    <property type="evidence" value="ECO:0007669"/>
    <property type="project" value="UniProtKB-SubCell"/>
</dbReference>
<dbReference type="GO" id="GO:0005524">
    <property type="term" value="F:ATP binding"/>
    <property type="evidence" value="ECO:0007669"/>
    <property type="project" value="UniProtKB-KW"/>
</dbReference>
<dbReference type="GO" id="GO:0140662">
    <property type="term" value="F:ATP-dependent protein folding chaperone"/>
    <property type="evidence" value="ECO:0007669"/>
    <property type="project" value="InterPro"/>
</dbReference>
<dbReference type="GO" id="GO:0016853">
    <property type="term" value="F:isomerase activity"/>
    <property type="evidence" value="ECO:0007669"/>
    <property type="project" value="UniProtKB-KW"/>
</dbReference>
<dbReference type="GO" id="GO:0042026">
    <property type="term" value="P:protein refolding"/>
    <property type="evidence" value="ECO:0007669"/>
    <property type="project" value="InterPro"/>
</dbReference>
<dbReference type="Gene3D" id="1.10.560.10">
    <property type="entry name" value="GroEL-like equatorial domain"/>
    <property type="match status" value="1"/>
</dbReference>
<dbReference type="Gene3D" id="3.30.260.10">
    <property type="entry name" value="TCP-1-like chaperonin intermediate domain"/>
    <property type="match status" value="1"/>
</dbReference>
<dbReference type="InterPro" id="IPR001844">
    <property type="entry name" value="Cpn60/GroEL"/>
</dbReference>
<dbReference type="InterPro" id="IPR002423">
    <property type="entry name" value="Cpn60/GroEL/TCP-1"/>
</dbReference>
<dbReference type="InterPro" id="IPR027413">
    <property type="entry name" value="GROEL-like_equatorial_sf"/>
</dbReference>
<dbReference type="InterPro" id="IPR027410">
    <property type="entry name" value="TCP-1-like_intermed_sf"/>
</dbReference>
<dbReference type="PANTHER" id="PTHR45633">
    <property type="entry name" value="60 KDA HEAT SHOCK PROTEIN, MITOCHONDRIAL"/>
    <property type="match status" value="1"/>
</dbReference>
<dbReference type="Pfam" id="PF00118">
    <property type="entry name" value="Cpn60_TCP1"/>
    <property type="match status" value="1"/>
</dbReference>
<dbReference type="SUPFAM" id="SSF48592">
    <property type="entry name" value="GroEL equatorial domain-like"/>
    <property type="match status" value="1"/>
</dbReference>
<protein>
    <recommendedName>
        <fullName evidence="1">Chaperonin GroEL</fullName>
        <ecNumber evidence="1">5.6.1.7</ecNumber>
    </recommendedName>
    <alternativeName>
        <fullName evidence="1">60 kDa chaperonin</fullName>
    </alternativeName>
    <alternativeName>
        <fullName>65 kDa heat shock protein</fullName>
    </alternativeName>
    <alternativeName>
        <fullName evidence="1">Chaperonin-60</fullName>
        <shortName evidence="1">Cpn60</shortName>
    </alternativeName>
</protein>
<accession>Q50827</accession>
<sequence length="120" mass="12381">PYEKIGAELVKEVAKKTDDVAGDGTTTATVLAQALVREGLRNVAAGANPLGLKRGIEKAVEAVTQSLLKSAKEVETKEQISATAAISAGDTQIGELIAEAMDKVGNEGVITVEESNTFGL</sequence>
<gene>
    <name evidence="1" type="primary">groEL</name>
    <name evidence="1" type="synonym">groL</name>
    <name type="synonym">mopA</name>
</gene>
<keyword id="KW-0067">ATP-binding</keyword>
<keyword id="KW-0143">Chaperone</keyword>
<keyword id="KW-0963">Cytoplasm</keyword>
<keyword id="KW-0413">Isomerase</keyword>
<keyword id="KW-0547">Nucleotide-binding</keyword>
<keyword id="KW-0346">Stress response</keyword>